<reference key="1">
    <citation type="journal article" date="2005" name="BMC Biol.">
        <title>The sequence of rice chromosomes 11 and 12, rich in disease resistance genes and recent gene duplications.</title>
        <authorList>
            <consortium name="The rice chromosomes 11 and 12 sequencing consortia"/>
        </authorList>
    </citation>
    <scope>NUCLEOTIDE SEQUENCE [LARGE SCALE GENOMIC DNA]</scope>
    <source>
        <strain>cv. Nipponbare</strain>
    </source>
</reference>
<reference key="2">
    <citation type="journal article" date="2005" name="Nature">
        <title>The map-based sequence of the rice genome.</title>
        <authorList>
            <consortium name="International rice genome sequencing project (IRGSP)"/>
        </authorList>
    </citation>
    <scope>NUCLEOTIDE SEQUENCE [LARGE SCALE GENOMIC DNA]</scope>
    <source>
        <strain>cv. Nipponbare</strain>
    </source>
</reference>
<reference key="3">
    <citation type="journal article" date="2008" name="Nucleic Acids Res.">
        <title>The rice annotation project database (RAP-DB): 2008 update.</title>
        <authorList>
            <consortium name="The rice annotation project (RAP)"/>
        </authorList>
    </citation>
    <scope>GENOME REANNOTATION</scope>
    <source>
        <strain>cv. Nipponbare</strain>
    </source>
</reference>
<reference key="4">
    <citation type="journal article" date="2013" name="Rice">
        <title>Improvement of the Oryza sativa Nipponbare reference genome using next generation sequence and optical map data.</title>
        <authorList>
            <person name="Kawahara Y."/>
            <person name="de la Bastide M."/>
            <person name="Hamilton J.P."/>
            <person name="Kanamori H."/>
            <person name="McCombie W.R."/>
            <person name="Ouyang S."/>
            <person name="Schwartz D.C."/>
            <person name="Tanaka T."/>
            <person name="Wu J."/>
            <person name="Zhou S."/>
            <person name="Childs K.L."/>
            <person name="Davidson R.M."/>
            <person name="Lin H."/>
            <person name="Quesada-Ocampo L."/>
            <person name="Vaillancourt B."/>
            <person name="Sakai H."/>
            <person name="Lee S.S."/>
            <person name="Kim J."/>
            <person name="Numa H."/>
            <person name="Itoh T."/>
            <person name="Buell C.R."/>
            <person name="Matsumoto T."/>
        </authorList>
    </citation>
    <scope>GENOME REANNOTATION</scope>
    <source>
        <strain>cv. Nipponbare</strain>
    </source>
</reference>
<evidence type="ECO:0000250" key="1">
    <source>
        <dbReference type="UniProtKB" id="O57767"/>
    </source>
</evidence>
<evidence type="ECO:0000250" key="2">
    <source>
        <dbReference type="UniProtKB" id="Q9FGS4"/>
    </source>
</evidence>
<evidence type="ECO:0000255" key="3"/>
<evidence type="ECO:0000256" key="4">
    <source>
        <dbReference type="SAM" id="MobiDB-lite"/>
    </source>
</evidence>
<evidence type="ECO:0000305" key="5"/>
<organism>
    <name type="scientific">Oryza sativa subsp. japonica</name>
    <name type="common">Rice</name>
    <dbReference type="NCBI Taxonomy" id="39947"/>
    <lineage>
        <taxon>Eukaryota</taxon>
        <taxon>Viridiplantae</taxon>
        <taxon>Streptophyta</taxon>
        <taxon>Embryophyta</taxon>
        <taxon>Tracheophyta</taxon>
        <taxon>Spermatophyta</taxon>
        <taxon>Magnoliopsida</taxon>
        <taxon>Liliopsida</taxon>
        <taxon>Poales</taxon>
        <taxon>Poaceae</taxon>
        <taxon>BOP clade</taxon>
        <taxon>Oryzoideae</taxon>
        <taxon>Oryzeae</taxon>
        <taxon>Oryzinae</taxon>
        <taxon>Oryza</taxon>
        <taxon>Oryza sativa</taxon>
    </lineage>
</organism>
<proteinExistence type="inferred from homology"/>
<protein>
    <recommendedName>
        <fullName evidence="2">Quinolinate synthase, chloroplastic</fullName>
        <ecNumber evidence="2">2.5.1.72</ecNumber>
    </recommendedName>
</protein>
<feature type="transit peptide" description="Chloroplast" evidence="3">
    <location>
        <begin position="1"/>
        <end position="41"/>
    </location>
</feature>
<feature type="chain" id="PRO_0000423477" description="Quinolinate synthase, chloroplastic">
    <location>
        <begin position="42"/>
        <end position="711"/>
    </location>
</feature>
<feature type="region of interest" description="Disordered" evidence="4">
    <location>
        <begin position="17"/>
        <end position="63"/>
    </location>
</feature>
<feature type="active site" description="Cysteine persulfide intermediate" evidence="2">
    <location>
        <position position="114"/>
    </location>
</feature>
<feature type="binding site" evidence="1">
    <location>
        <position position="263"/>
    </location>
    <ligand>
        <name>iminosuccinate</name>
        <dbReference type="ChEBI" id="CHEBI:77875"/>
    </ligand>
</feature>
<feature type="binding site" evidence="1">
    <location>
        <position position="289"/>
    </location>
    <ligand>
        <name>iminosuccinate</name>
        <dbReference type="ChEBI" id="CHEBI:77875"/>
    </ligand>
</feature>
<feature type="binding site" evidence="1">
    <location>
        <position position="343"/>
    </location>
    <ligand>
        <name>[4Fe-4S] cluster</name>
        <dbReference type="ChEBI" id="CHEBI:49883"/>
    </ligand>
</feature>
<feature type="binding site" evidence="1">
    <location>
        <begin position="372"/>
        <end position="374"/>
    </location>
    <ligand>
        <name>iminosuccinate</name>
        <dbReference type="ChEBI" id="CHEBI:77875"/>
    </ligand>
</feature>
<feature type="binding site" evidence="1">
    <location>
        <position position="394"/>
    </location>
    <ligand>
        <name>iminosuccinate</name>
        <dbReference type="ChEBI" id="CHEBI:77875"/>
    </ligand>
</feature>
<feature type="binding site" evidence="1">
    <location>
        <position position="467"/>
    </location>
    <ligand>
        <name>[4Fe-4S] cluster</name>
        <dbReference type="ChEBI" id="CHEBI:49883"/>
    </ligand>
</feature>
<feature type="binding site" evidence="1">
    <location>
        <begin position="493"/>
        <end position="495"/>
    </location>
    <ligand>
        <name>iminosuccinate</name>
        <dbReference type="ChEBI" id="CHEBI:77875"/>
    </ligand>
</feature>
<feature type="binding site" evidence="1">
    <location>
        <position position="518"/>
    </location>
    <ligand>
        <name>iminosuccinate</name>
        <dbReference type="ChEBI" id="CHEBI:77875"/>
    </ligand>
</feature>
<feature type="binding site" evidence="1">
    <location>
        <position position="631"/>
    </location>
    <ligand>
        <name>[4Fe-4S] cluster</name>
        <dbReference type="ChEBI" id="CHEBI:49883"/>
    </ligand>
</feature>
<name>NADA_ORYSJ</name>
<keyword id="KW-0004">4Fe-4S</keyword>
<keyword id="KW-0150">Chloroplast</keyword>
<keyword id="KW-0408">Iron</keyword>
<keyword id="KW-0411">Iron-sulfur</keyword>
<keyword id="KW-0479">Metal-binding</keyword>
<keyword id="KW-0934">Plastid</keyword>
<keyword id="KW-0662">Pyridine nucleotide biosynthesis</keyword>
<keyword id="KW-1185">Reference proteome</keyword>
<keyword id="KW-0808">Transferase</keyword>
<keyword id="KW-0809">Transit peptide</keyword>
<accession>Q2QTL0</accession>
<accession>A0A0P0Y9A3</accession>
<comment type="function">
    <text evidence="2">Catalyzes the condensation of iminoaspartate with dihydroxyacetone phosphate to form quinolinate.</text>
</comment>
<comment type="catalytic activity">
    <reaction evidence="2">
        <text>iminosuccinate + dihydroxyacetone phosphate = quinolinate + phosphate + 2 H2O + H(+)</text>
        <dbReference type="Rhea" id="RHEA:25888"/>
        <dbReference type="ChEBI" id="CHEBI:15377"/>
        <dbReference type="ChEBI" id="CHEBI:15378"/>
        <dbReference type="ChEBI" id="CHEBI:29959"/>
        <dbReference type="ChEBI" id="CHEBI:43474"/>
        <dbReference type="ChEBI" id="CHEBI:57642"/>
        <dbReference type="ChEBI" id="CHEBI:77875"/>
        <dbReference type="EC" id="2.5.1.72"/>
    </reaction>
</comment>
<comment type="cofactor">
    <cofactor evidence="2">
        <name>[4Fe-4S] cluster</name>
        <dbReference type="ChEBI" id="CHEBI:49883"/>
    </cofactor>
    <text evidence="2">Binds 1 [4Fe-4S] cluster per subunit.</text>
</comment>
<comment type="pathway">
    <text evidence="2">Cofactor biosynthesis; NAD(+) biosynthesis; quinolinate from iminoaspartate: step 1/1.</text>
</comment>
<comment type="subunit">
    <text evidence="2">Homodimer.</text>
</comment>
<comment type="subcellular location">
    <subcellularLocation>
        <location evidence="2">Plastid</location>
        <location evidence="2">Chloroplast</location>
    </subcellularLocation>
</comment>
<comment type="similarity">
    <text evidence="5">Belongs to the quinolinate synthase family. Type 1 subfamily.</text>
</comment>
<comment type="sequence caution" evidence="5">
    <conflict type="erroneous gene model prediction">
        <sequence resource="EMBL-CDS" id="ABA97161"/>
    </conflict>
</comment>
<comment type="sequence caution" evidence="5">
    <conflict type="erroneous gene model prediction">
        <sequence resource="EMBL-CDS" id="ABG21971"/>
    </conflict>
</comment>
<sequence length="711" mass="76683">MDVSSLAAAAPSLVAPPLHHKPHLAFPPHHPSPARGSIGVRCAHSPSPHPLRPSAATADEEVSLPPSLRVSRLAEEFRVSPDAADRARRLLARAAALPRLGEADRVAANRVMGCVAQVWLVGRCDGAGRMRFAADSDSELSRGYCACLVSALDGARPEEVLDVDPADLAPLGGAAAGTGARSRASTWHNVLIGMQKRARAAIAAREGRPAGEPFPSLIIGRDGAIRAQGTYAEAQAMFLSPNESKTSELVKSLREKKIGIVAHFYMDPEVQGILTASKKHWPHIHISDSLVMADSAVKMAEAGCEYITVLGVDFMSENVRAILDQAGYSKVGVYRMSSDQIGCSLADAASSSAYTHFLKEASRSPPSLHVIYINTSLETKAHAHELVPTITCTSSNVVATILQAFAQIPGLNVWYGPDSYMGANIADLFQRMAVMSDEEIAEVHPSHNKKSINALLPRLHYYQDGNCIVHDMFGHEVVDKIKEQYCDAFLTAHFEVPGEMFSLSMEAKTRGMGVVGSTQNILDFIKNHLMEALDRNIDDHLQFVLGTESGMITSIVAAVRELFDSYKTSQQSANIEVEIVFPVSSDAVSNTSVNGSHHLDSSTVTDLDNVSVVPGVSSGEGCSIHGGCASCPYMKMNSLRSLLKVCHQLPDRDNRLVAYQASRFNAKTPLGKLVAEVGCEPILHMRHFQATKRLPDKLVHHVIHGKGEPTS</sequence>
<dbReference type="EC" id="2.5.1.72" evidence="2"/>
<dbReference type="EMBL" id="DP000011">
    <property type="protein sequence ID" value="ABA97161.1"/>
    <property type="status" value="ALT_SEQ"/>
    <property type="molecule type" value="Genomic_DNA"/>
</dbReference>
<dbReference type="EMBL" id="DP000011">
    <property type="protein sequence ID" value="ABG21971.1"/>
    <property type="status" value="ALT_SEQ"/>
    <property type="molecule type" value="Genomic_DNA"/>
</dbReference>
<dbReference type="EMBL" id="AP008218">
    <property type="status" value="NOT_ANNOTATED_CDS"/>
    <property type="molecule type" value="Genomic_DNA"/>
</dbReference>
<dbReference type="EMBL" id="AP014968">
    <property type="protein sequence ID" value="BAT16777.1"/>
    <property type="molecule type" value="Genomic_DNA"/>
</dbReference>
<dbReference type="SMR" id="Q2QTL0"/>
<dbReference type="FunCoup" id="Q2QTL0">
    <property type="interactions" value="466"/>
</dbReference>
<dbReference type="STRING" id="39947.Q2QTL0"/>
<dbReference type="PaxDb" id="39947-Q2QTL0"/>
<dbReference type="EnsemblPlants" id="Os12t0290150-00">
    <property type="protein sequence ID" value="Os12t0290150-00"/>
    <property type="gene ID" value="Os12g0290150"/>
</dbReference>
<dbReference type="Gramene" id="Os12t0290150-00">
    <property type="protein sequence ID" value="Os12t0290150-00"/>
    <property type="gene ID" value="Os12g0290150"/>
</dbReference>
<dbReference type="KEGG" id="osa:107275865"/>
<dbReference type="eggNOG" id="ENOG502QPQ6">
    <property type="taxonomic scope" value="Eukaryota"/>
</dbReference>
<dbReference type="HOGENOM" id="CLU_020092_1_0_1"/>
<dbReference type="InParanoid" id="Q2QTL0"/>
<dbReference type="OMA" id="MRFWADS"/>
<dbReference type="OrthoDB" id="66991at2759"/>
<dbReference type="PlantReactome" id="R-OSA-1119384">
    <property type="pathway name" value="NAD biosynthesis I (from aspartate)"/>
</dbReference>
<dbReference type="UniPathway" id="UPA00253">
    <property type="reaction ID" value="UER00327"/>
</dbReference>
<dbReference type="Proteomes" id="UP000000763">
    <property type="component" value="Chromosome 12"/>
</dbReference>
<dbReference type="Proteomes" id="UP000059680">
    <property type="component" value="Chromosome 12"/>
</dbReference>
<dbReference type="GO" id="GO:0009507">
    <property type="term" value="C:chloroplast"/>
    <property type="evidence" value="ECO:0000318"/>
    <property type="project" value="GO_Central"/>
</dbReference>
<dbReference type="GO" id="GO:0051539">
    <property type="term" value="F:4 iron, 4 sulfur cluster binding"/>
    <property type="evidence" value="ECO:0000318"/>
    <property type="project" value="GO_Central"/>
</dbReference>
<dbReference type="GO" id="GO:0046872">
    <property type="term" value="F:metal ion binding"/>
    <property type="evidence" value="ECO:0007669"/>
    <property type="project" value="UniProtKB-KW"/>
</dbReference>
<dbReference type="GO" id="GO:0008987">
    <property type="term" value="F:quinolinate synthetase A activity"/>
    <property type="evidence" value="ECO:0000318"/>
    <property type="project" value="GO_Central"/>
</dbReference>
<dbReference type="GO" id="GO:0034628">
    <property type="term" value="P:'de novo' NAD biosynthetic process from L-aspartate"/>
    <property type="evidence" value="ECO:0000318"/>
    <property type="project" value="GO_Central"/>
</dbReference>
<dbReference type="FunFam" id="3.40.50.10800:FF:000008">
    <property type="entry name" value="Quinolinate synthase chloroplastic"/>
    <property type="match status" value="1"/>
</dbReference>
<dbReference type="FunFam" id="3.40.50.10800:FF:000006">
    <property type="entry name" value="Quinolinate synthase, chloroplastic"/>
    <property type="match status" value="1"/>
</dbReference>
<dbReference type="FunFam" id="3.40.50.10800:FF:000009">
    <property type="entry name" value="Quinolinate synthase, chloroplastic"/>
    <property type="match status" value="1"/>
</dbReference>
<dbReference type="FunFam" id="3.90.1010.10:FF:000010">
    <property type="entry name" value="Quinolinate synthase, chloroplastic"/>
    <property type="match status" value="1"/>
</dbReference>
<dbReference type="Gene3D" id="3.90.1010.10">
    <property type="match status" value="1"/>
</dbReference>
<dbReference type="Gene3D" id="3.40.50.10800">
    <property type="entry name" value="NadA-like"/>
    <property type="match status" value="3"/>
</dbReference>
<dbReference type="InterPro" id="IPR003808">
    <property type="entry name" value="Fe-S_metab-assoc_dom"/>
</dbReference>
<dbReference type="InterPro" id="IPR003473">
    <property type="entry name" value="NadA"/>
</dbReference>
<dbReference type="InterPro" id="IPR036094">
    <property type="entry name" value="NadA_sf"/>
</dbReference>
<dbReference type="PANTHER" id="PTHR30573:SF0">
    <property type="entry name" value="QUINOLINATE SYNTHASE, CHLOROPLASTIC"/>
    <property type="match status" value="1"/>
</dbReference>
<dbReference type="PANTHER" id="PTHR30573">
    <property type="entry name" value="QUINOLINATE SYNTHETASE A"/>
    <property type="match status" value="1"/>
</dbReference>
<dbReference type="Pfam" id="PF02445">
    <property type="entry name" value="NadA"/>
    <property type="match status" value="1"/>
</dbReference>
<dbReference type="Pfam" id="PF02657">
    <property type="entry name" value="SufE"/>
    <property type="match status" value="1"/>
</dbReference>
<dbReference type="SUPFAM" id="SSF142754">
    <property type="entry name" value="NadA-like"/>
    <property type="match status" value="1"/>
</dbReference>
<dbReference type="SUPFAM" id="SSF82649">
    <property type="entry name" value="SufE/NifU"/>
    <property type="match status" value="1"/>
</dbReference>
<gene>
    <name evidence="2" type="primary">QS</name>
    <name type="ordered locus">Os12g0290150</name>
    <name type="ordered locus">LOC_Os12g19304</name>
</gene>